<name>RL3_STRGC</name>
<protein>
    <recommendedName>
        <fullName evidence="1">Large ribosomal subunit protein uL3</fullName>
    </recommendedName>
    <alternativeName>
        <fullName evidence="3">50S ribosomal protein L3</fullName>
    </alternativeName>
</protein>
<proteinExistence type="inferred from homology"/>
<gene>
    <name evidence="1" type="primary">rplC</name>
    <name type="ordered locus">SGO_1985</name>
</gene>
<accession>A8AZM5</accession>
<keyword id="KW-1185">Reference proteome</keyword>
<keyword id="KW-0687">Ribonucleoprotein</keyword>
<keyword id="KW-0689">Ribosomal protein</keyword>
<keyword id="KW-0694">RNA-binding</keyword>
<keyword id="KW-0699">rRNA-binding</keyword>
<feature type="chain" id="PRO_1000086465" description="Large ribosomal subunit protein uL3">
    <location>
        <begin position="1"/>
        <end position="208"/>
    </location>
</feature>
<feature type="region of interest" description="Disordered" evidence="2">
    <location>
        <begin position="123"/>
        <end position="147"/>
    </location>
</feature>
<evidence type="ECO:0000255" key="1">
    <source>
        <dbReference type="HAMAP-Rule" id="MF_01325"/>
    </source>
</evidence>
<evidence type="ECO:0000256" key="2">
    <source>
        <dbReference type="SAM" id="MobiDB-lite"/>
    </source>
</evidence>
<evidence type="ECO:0000305" key="3"/>
<sequence length="208" mass="22200">MTKGILGKKVGMTQIFTEAGELIPVTVIEATPNVVLQVKTVETDGYNAVQVGFDDLRDVLSNKPAKGHVAKANTAPKRFIREFKNIEGLEVGAEITVDTFAAGDVVDVTGTSKGKGFQGVIKRHGQSRGPMAHGSRYHRRPGSMGPVAPNRVFKNKHLAGRMGGNRVTIQNLEIAQVVPEKNVILIKGNVPGAKKSLITIKSAVKAGK</sequence>
<dbReference type="EMBL" id="CP000725">
    <property type="protein sequence ID" value="ABV10787.1"/>
    <property type="molecule type" value="Genomic_DNA"/>
</dbReference>
<dbReference type="RefSeq" id="WP_008809910.1">
    <property type="nucleotide sequence ID" value="NC_009785.1"/>
</dbReference>
<dbReference type="SMR" id="A8AZM5"/>
<dbReference type="STRING" id="467705.SGO_1985"/>
<dbReference type="GeneID" id="93786842"/>
<dbReference type="KEGG" id="sgo:SGO_1985"/>
<dbReference type="eggNOG" id="COG0087">
    <property type="taxonomic scope" value="Bacteria"/>
</dbReference>
<dbReference type="HOGENOM" id="CLU_044142_4_1_9"/>
<dbReference type="Proteomes" id="UP000001131">
    <property type="component" value="Chromosome"/>
</dbReference>
<dbReference type="GO" id="GO:0022625">
    <property type="term" value="C:cytosolic large ribosomal subunit"/>
    <property type="evidence" value="ECO:0007669"/>
    <property type="project" value="TreeGrafter"/>
</dbReference>
<dbReference type="GO" id="GO:0019843">
    <property type="term" value="F:rRNA binding"/>
    <property type="evidence" value="ECO:0007669"/>
    <property type="project" value="UniProtKB-UniRule"/>
</dbReference>
<dbReference type="GO" id="GO:0003735">
    <property type="term" value="F:structural constituent of ribosome"/>
    <property type="evidence" value="ECO:0007669"/>
    <property type="project" value="InterPro"/>
</dbReference>
<dbReference type="GO" id="GO:0006412">
    <property type="term" value="P:translation"/>
    <property type="evidence" value="ECO:0007669"/>
    <property type="project" value="UniProtKB-UniRule"/>
</dbReference>
<dbReference type="FunFam" id="2.40.30.10:FF:000004">
    <property type="entry name" value="50S ribosomal protein L3"/>
    <property type="match status" value="1"/>
</dbReference>
<dbReference type="FunFam" id="3.30.160.810:FF:000002">
    <property type="entry name" value="50S ribosomal protein L3"/>
    <property type="match status" value="1"/>
</dbReference>
<dbReference type="Gene3D" id="3.30.160.810">
    <property type="match status" value="1"/>
</dbReference>
<dbReference type="Gene3D" id="2.40.30.10">
    <property type="entry name" value="Translation factors"/>
    <property type="match status" value="1"/>
</dbReference>
<dbReference type="HAMAP" id="MF_01325_B">
    <property type="entry name" value="Ribosomal_uL3_B"/>
    <property type="match status" value="1"/>
</dbReference>
<dbReference type="InterPro" id="IPR000597">
    <property type="entry name" value="Ribosomal_uL3"/>
</dbReference>
<dbReference type="InterPro" id="IPR019927">
    <property type="entry name" value="Ribosomal_uL3_bac/org-type"/>
</dbReference>
<dbReference type="InterPro" id="IPR019926">
    <property type="entry name" value="Ribosomal_uL3_CS"/>
</dbReference>
<dbReference type="InterPro" id="IPR009000">
    <property type="entry name" value="Transl_B-barrel_sf"/>
</dbReference>
<dbReference type="NCBIfam" id="TIGR03625">
    <property type="entry name" value="L3_bact"/>
    <property type="match status" value="1"/>
</dbReference>
<dbReference type="PANTHER" id="PTHR11229">
    <property type="entry name" value="50S RIBOSOMAL PROTEIN L3"/>
    <property type="match status" value="1"/>
</dbReference>
<dbReference type="PANTHER" id="PTHR11229:SF16">
    <property type="entry name" value="LARGE RIBOSOMAL SUBUNIT PROTEIN UL3C"/>
    <property type="match status" value="1"/>
</dbReference>
<dbReference type="Pfam" id="PF00297">
    <property type="entry name" value="Ribosomal_L3"/>
    <property type="match status" value="1"/>
</dbReference>
<dbReference type="SUPFAM" id="SSF50447">
    <property type="entry name" value="Translation proteins"/>
    <property type="match status" value="1"/>
</dbReference>
<dbReference type="PROSITE" id="PS00474">
    <property type="entry name" value="RIBOSOMAL_L3"/>
    <property type="match status" value="1"/>
</dbReference>
<comment type="function">
    <text evidence="1">One of the primary rRNA binding proteins, it binds directly near the 3'-end of the 23S rRNA, where it nucleates assembly of the 50S subunit.</text>
</comment>
<comment type="subunit">
    <text evidence="1">Part of the 50S ribosomal subunit. Forms a cluster with proteins L14 and L19.</text>
</comment>
<comment type="similarity">
    <text evidence="1">Belongs to the universal ribosomal protein uL3 family.</text>
</comment>
<organism>
    <name type="scientific">Streptococcus gordonii (strain Challis / ATCC 35105 / BCRC 15272 / CH1 / DL1 / V288)</name>
    <dbReference type="NCBI Taxonomy" id="467705"/>
    <lineage>
        <taxon>Bacteria</taxon>
        <taxon>Bacillati</taxon>
        <taxon>Bacillota</taxon>
        <taxon>Bacilli</taxon>
        <taxon>Lactobacillales</taxon>
        <taxon>Streptococcaceae</taxon>
        <taxon>Streptococcus</taxon>
    </lineage>
</organism>
<reference key="1">
    <citation type="journal article" date="2007" name="J. Bacteriol.">
        <title>Genome-wide transcriptional changes in Streptococcus gordonii in response to competence signaling peptide.</title>
        <authorList>
            <person name="Vickerman M.M."/>
            <person name="Iobst S."/>
            <person name="Jesionowski A.M."/>
            <person name="Gill S.R."/>
        </authorList>
    </citation>
    <scope>NUCLEOTIDE SEQUENCE [LARGE SCALE GENOMIC DNA]</scope>
    <source>
        <strain>Challis / ATCC 35105 / BCRC 15272 / CH1 / DL1 / V288</strain>
    </source>
</reference>